<protein>
    <recommendedName>
        <fullName evidence="1">Methionine--tRNA ligase</fullName>
        <ecNumber evidence="1">6.1.1.10</ecNumber>
    </recommendedName>
    <alternativeName>
        <fullName evidence="1">Methionyl-tRNA synthetase</fullName>
        <shortName evidence="1">MetRS</shortName>
    </alternativeName>
</protein>
<name>SYM_ENTFA</name>
<reference key="1">
    <citation type="journal article" date="2003" name="Science">
        <title>Role of mobile DNA in the evolution of vancomycin-resistant Enterococcus faecalis.</title>
        <authorList>
            <person name="Paulsen I.T."/>
            <person name="Banerjei L."/>
            <person name="Myers G.S.A."/>
            <person name="Nelson K.E."/>
            <person name="Seshadri R."/>
            <person name="Read T.D."/>
            <person name="Fouts D.E."/>
            <person name="Eisen J.A."/>
            <person name="Gill S.R."/>
            <person name="Heidelberg J.F."/>
            <person name="Tettelin H."/>
            <person name="Dodson R.J."/>
            <person name="Umayam L.A."/>
            <person name="Brinkac L.M."/>
            <person name="Beanan M.J."/>
            <person name="Daugherty S.C."/>
            <person name="DeBoy R.T."/>
            <person name="Durkin S.A."/>
            <person name="Kolonay J.F."/>
            <person name="Madupu R."/>
            <person name="Nelson W.C."/>
            <person name="Vamathevan J.J."/>
            <person name="Tran B."/>
            <person name="Upton J."/>
            <person name="Hansen T."/>
            <person name="Shetty J."/>
            <person name="Khouri H.M."/>
            <person name="Utterback T.R."/>
            <person name="Radune D."/>
            <person name="Ketchum K.A."/>
            <person name="Dougherty B.A."/>
            <person name="Fraser C.M."/>
        </authorList>
    </citation>
    <scope>NUCLEOTIDE SEQUENCE [LARGE SCALE GENOMIC DNA]</scope>
    <source>
        <strain>ATCC 700802 / V583</strain>
    </source>
</reference>
<sequence length="669" mass="76339">MSQKETFYITTPIYYPSGKLHIGNSYTTIACDAMARYKRLMGFDVFYLTGVDEHGQKIEKKAAELNVTPKEYVDKMAADVQKLWKTLDISYDKFIRTTDDYHMAAVQQIFDRLVEQGDIYLGEYEGWYSVSDEEFFTETQLAEVYRDDEGNVIGGKAPSGHEVELVKEESYFFRMSKYADRLVQYYEEHPEFIQPESRKNEMLNNFIKPGLEDLAVSRTTFSWGIPLKNDPKHVVYVWIDALSNYITALGYGSEDDSLFQKYWPANVQMVGKEIVRFHTIYWPIMLMALDLPLPKKVFGHGWLLMKDGKMSKSKGNVVYPEMLVERYGLDALRYYLLRAIPFGSDGVFTPEDFVSRLNYDLANDLGNLLNRTIAMINKYCDGKVPAYASKVTPFDSELSTTAANVIGKYHEAMEKMEFNTAIAEIWTLVSRANKYIDETAPWVLAKEEEKRNELESVMIHLAESLRIVAILLQPVMTETPGKIFEQLGLDPETMNMENIHFGEFPTDVTVTSKGTPIFPRLEIETEVTYIQKKMSQSESATEEDIKWNPEETTLVSTKEKQIKYDDFDKVELKVAEVIDCKKVKGADKLLQFRLDAGDENHRQILSGIAEFYPDPAALIGKKVVIVANLKPRKMRGQISQGMILSAESPEGKLQIVEAPKEMPNGAGIA</sequence>
<keyword id="KW-0030">Aminoacyl-tRNA synthetase</keyword>
<keyword id="KW-0067">ATP-binding</keyword>
<keyword id="KW-0963">Cytoplasm</keyword>
<keyword id="KW-0436">Ligase</keyword>
<keyword id="KW-0479">Metal-binding</keyword>
<keyword id="KW-0547">Nucleotide-binding</keyword>
<keyword id="KW-0648">Protein biosynthesis</keyword>
<keyword id="KW-1185">Reference proteome</keyword>
<keyword id="KW-0694">RNA-binding</keyword>
<keyword id="KW-0820">tRNA-binding</keyword>
<keyword id="KW-0862">Zinc</keyword>
<feature type="chain" id="PRO_0000139219" description="Methionine--tRNA ligase">
    <location>
        <begin position="1"/>
        <end position="669"/>
    </location>
</feature>
<feature type="domain" description="tRNA-binding" evidence="1">
    <location>
        <begin position="566"/>
        <end position="669"/>
    </location>
</feature>
<feature type="short sequence motif" description="'HIGH' region">
    <location>
        <begin position="14"/>
        <end position="24"/>
    </location>
</feature>
<feature type="short sequence motif" description="'KMSKS' region">
    <location>
        <begin position="309"/>
        <end position="313"/>
    </location>
</feature>
<feature type="binding site" evidence="1">
    <location>
        <position position="161"/>
    </location>
    <ligand>
        <name>Zn(2+)</name>
        <dbReference type="ChEBI" id="CHEBI:29105"/>
    </ligand>
</feature>
<feature type="binding site" evidence="1">
    <location>
        <position position="312"/>
    </location>
    <ligand>
        <name>ATP</name>
        <dbReference type="ChEBI" id="CHEBI:30616"/>
    </ligand>
</feature>
<dbReference type="EC" id="6.1.1.10" evidence="1"/>
<dbReference type="EMBL" id="AE016830">
    <property type="protein sequence ID" value="AAO80738.1"/>
    <property type="molecule type" value="Genomic_DNA"/>
</dbReference>
<dbReference type="RefSeq" id="NP_814668.1">
    <property type="nucleotide sequence ID" value="NC_004668.1"/>
</dbReference>
<dbReference type="RefSeq" id="WP_002355813.1">
    <property type="nucleotide sequence ID" value="NZ_KE136527.1"/>
</dbReference>
<dbReference type="SMR" id="Q837B3"/>
<dbReference type="STRING" id="226185.EF_0930"/>
<dbReference type="ChEMBL" id="CHEMBL4043"/>
<dbReference type="EnsemblBacteria" id="AAO80738">
    <property type="protein sequence ID" value="AAO80738"/>
    <property type="gene ID" value="EF_0930"/>
</dbReference>
<dbReference type="GeneID" id="60893267"/>
<dbReference type="KEGG" id="efa:EF0930"/>
<dbReference type="PATRIC" id="fig|226185.45.peg.3138"/>
<dbReference type="eggNOG" id="COG0073">
    <property type="taxonomic scope" value="Bacteria"/>
</dbReference>
<dbReference type="eggNOG" id="COG0143">
    <property type="taxonomic scope" value="Bacteria"/>
</dbReference>
<dbReference type="HOGENOM" id="CLU_009710_9_4_9"/>
<dbReference type="SABIO-RK" id="Q837B3"/>
<dbReference type="Proteomes" id="UP000001415">
    <property type="component" value="Chromosome"/>
</dbReference>
<dbReference type="GO" id="GO:0005737">
    <property type="term" value="C:cytoplasm"/>
    <property type="evidence" value="ECO:0007669"/>
    <property type="project" value="UniProtKB-SubCell"/>
</dbReference>
<dbReference type="GO" id="GO:0005524">
    <property type="term" value="F:ATP binding"/>
    <property type="evidence" value="ECO:0007669"/>
    <property type="project" value="UniProtKB-UniRule"/>
</dbReference>
<dbReference type="GO" id="GO:0046872">
    <property type="term" value="F:metal ion binding"/>
    <property type="evidence" value="ECO:0007669"/>
    <property type="project" value="UniProtKB-KW"/>
</dbReference>
<dbReference type="GO" id="GO:0004825">
    <property type="term" value="F:methionine-tRNA ligase activity"/>
    <property type="evidence" value="ECO:0007669"/>
    <property type="project" value="UniProtKB-UniRule"/>
</dbReference>
<dbReference type="GO" id="GO:0000049">
    <property type="term" value="F:tRNA binding"/>
    <property type="evidence" value="ECO:0007669"/>
    <property type="project" value="UniProtKB-KW"/>
</dbReference>
<dbReference type="GO" id="GO:0006431">
    <property type="term" value="P:methionyl-tRNA aminoacylation"/>
    <property type="evidence" value="ECO:0007669"/>
    <property type="project" value="UniProtKB-UniRule"/>
</dbReference>
<dbReference type="CDD" id="cd07957">
    <property type="entry name" value="Anticodon_Ia_Met"/>
    <property type="match status" value="1"/>
</dbReference>
<dbReference type="CDD" id="cd00814">
    <property type="entry name" value="MetRS_core"/>
    <property type="match status" value="1"/>
</dbReference>
<dbReference type="CDD" id="cd02800">
    <property type="entry name" value="tRNA_bind_EcMetRS_like"/>
    <property type="match status" value="1"/>
</dbReference>
<dbReference type="FunFam" id="1.10.730.10:FF:000026">
    <property type="entry name" value="Methionine--tRNA ligase"/>
    <property type="match status" value="1"/>
</dbReference>
<dbReference type="FunFam" id="2.170.220.10:FF:000002">
    <property type="entry name" value="Methionine--tRNA ligase"/>
    <property type="match status" value="1"/>
</dbReference>
<dbReference type="FunFam" id="2.40.50.140:FF:000042">
    <property type="entry name" value="Methionine--tRNA ligase"/>
    <property type="match status" value="1"/>
</dbReference>
<dbReference type="Gene3D" id="2.170.220.10">
    <property type="match status" value="1"/>
</dbReference>
<dbReference type="Gene3D" id="3.40.50.620">
    <property type="entry name" value="HUPs"/>
    <property type="match status" value="1"/>
</dbReference>
<dbReference type="Gene3D" id="1.10.730.10">
    <property type="entry name" value="Isoleucyl-tRNA Synthetase, Domain 1"/>
    <property type="match status" value="1"/>
</dbReference>
<dbReference type="Gene3D" id="2.40.50.140">
    <property type="entry name" value="Nucleic acid-binding proteins"/>
    <property type="match status" value="1"/>
</dbReference>
<dbReference type="HAMAP" id="MF_01228">
    <property type="entry name" value="Met_tRNA_synth_type2"/>
    <property type="match status" value="1"/>
</dbReference>
<dbReference type="InterPro" id="IPR001412">
    <property type="entry name" value="aa-tRNA-synth_I_CS"/>
</dbReference>
<dbReference type="InterPro" id="IPR041872">
    <property type="entry name" value="Anticodon_Met"/>
</dbReference>
<dbReference type="InterPro" id="IPR004495">
    <property type="entry name" value="Met-tRNA-synth_bsu_C"/>
</dbReference>
<dbReference type="InterPro" id="IPR014758">
    <property type="entry name" value="Met-tRNA_synth"/>
</dbReference>
<dbReference type="InterPro" id="IPR023457">
    <property type="entry name" value="Met-tRNA_synth_2"/>
</dbReference>
<dbReference type="InterPro" id="IPR015413">
    <property type="entry name" value="Methionyl/Leucyl_tRNA_Synth"/>
</dbReference>
<dbReference type="InterPro" id="IPR033911">
    <property type="entry name" value="MetRS_core"/>
</dbReference>
<dbReference type="InterPro" id="IPR012340">
    <property type="entry name" value="NA-bd_OB-fold"/>
</dbReference>
<dbReference type="InterPro" id="IPR014729">
    <property type="entry name" value="Rossmann-like_a/b/a_fold"/>
</dbReference>
<dbReference type="InterPro" id="IPR002547">
    <property type="entry name" value="tRNA-bd_dom"/>
</dbReference>
<dbReference type="InterPro" id="IPR009080">
    <property type="entry name" value="tRNAsynth_Ia_anticodon-bd"/>
</dbReference>
<dbReference type="NCBIfam" id="TIGR00398">
    <property type="entry name" value="metG"/>
    <property type="match status" value="1"/>
</dbReference>
<dbReference type="NCBIfam" id="TIGR00399">
    <property type="entry name" value="metG_C_term"/>
    <property type="match status" value="1"/>
</dbReference>
<dbReference type="NCBIfam" id="NF008900">
    <property type="entry name" value="PRK12267.1"/>
    <property type="match status" value="1"/>
</dbReference>
<dbReference type="PANTHER" id="PTHR43326:SF1">
    <property type="entry name" value="METHIONINE--TRNA LIGASE, MITOCHONDRIAL"/>
    <property type="match status" value="1"/>
</dbReference>
<dbReference type="PANTHER" id="PTHR43326">
    <property type="entry name" value="METHIONYL-TRNA SYNTHETASE"/>
    <property type="match status" value="1"/>
</dbReference>
<dbReference type="Pfam" id="PF19303">
    <property type="entry name" value="Anticodon_3"/>
    <property type="match status" value="1"/>
</dbReference>
<dbReference type="Pfam" id="PF09334">
    <property type="entry name" value="tRNA-synt_1g"/>
    <property type="match status" value="1"/>
</dbReference>
<dbReference type="Pfam" id="PF01588">
    <property type="entry name" value="tRNA_bind"/>
    <property type="match status" value="1"/>
</dbReference>
<dbReference type="PRINTS" id="PR01041">
    <property type="entry name" value="TRNASYNTHMET"/>
</dbReference>
<dbReference type="SUPFAM" id="SSF47323">
    <property type="entry name" value="Anticodon-binding domain of a subclass of class I aminoacyl-tRNA synthetases"/>
    <property type="match status" value="1"/>
</dbReference>
<dbReference type="SUPFAM" id="SSF50249">
    <property type="entry name" value="Nucleic acid-binding proteins"/>
    <property type="match status" value="1"/>
</dbReference>
<dbReference type="SUPFAM" id="SSF52374">
    <property type="entry name" value="Nucleotidylyl transferase"/>
    <property type="match status" value="1"/>
</dbReference>
<dbReference type="PROSITE" id="PS00178">
    <property type="entry name" value="AA_TRNA_LIGASE_I"/>
    <property type="match status" value="1"/>
</dbReference>
<dbReference type="PROSITE" id="PS50886">
    <property type="entry name" value="TRBD"/>
    <property type="match status" value="1"/>
</dbReference>
<proteinExistence type="inferred from homology"/>
<comment type="function">
    <text evidence="1">Is required not only for elongation of protein synthesis but also for the initiation of all mRNA translation through initiator tRNA(fMet) aminoacylation.</text>
</comment>
<comment type="catalytic activity">
    <reaction evidence="1">
        <text>tRNA(Met) + L-methionine + ATP = L-methionyl-tRNA(Met) + AMP + diphosphate</text>
        <dbReference type="Rhea" id="RHEA:13481"/>
        <dbReference type="Rhea" id="RHEA-COMP:9667"/>
        <dbReference type="Rhea" id="RHEA-COMP:9698"/>
        <dbReference type="ChEBI" id="CHEBI:30616"/>
        <dbReference type="ChEBI" id="CHEBI:33019"/>
        <dbReference type="ChEBI" id="CHEBI:57844"/>
        <dbReference type="ChEBI" id="CHEBI:78442"/>
        <dbReference type="ChEBI" id="CHEBI:78530"/>
        <dbReference type="ChEBI" id="CHEBI:456215"/>
        <dbReference type="EC" id="6.1.1.10"/>
    </reaction>
</comment>
<comment type="subunit">
    <text evidence="1">Homodimer.</text>
</comment>
<comment type="subcellular location">
    <subcellularLocation>
        <location evidence="1">Cytoplasm</location>
    </subcellularLocation>
</comment>
<comment type="similarity">
    <text evidence="1">Belongs to the class-I aminoacyl-tRNA synthetase family. MetG type 2B subfamily.</text>
</comment>
<organism>
    <name type="scientific">Enterococcus faecalis (strain ATCC 700802 / V583)</name>
    <dbReference type="NCBI Taxonomy" id="226185"/>
    <lineage>
        <taxon>Bacteria</taxon>
        <taxon>Bacillati</taxon>
        <taxon>Bacillota</taxon>
        <taxon>Bacilli</taxon>
        <taxon>Lactobacillales</taxon>
        <taxon>Enterococcaceae</taxon>
        <taxon>Enterococcus</taxon>
    </lineage>
</organism>
<gene>
    <name evidence="1" type="primary">metG</name>
    <name type="ordered locus">EF_0930</name>
</gene>
<evidence type="ECO:0000255" key="1">
    <source>
        <dbReference type="HAMAP-Rule" id="MF_01228"/>
    </source>
</evidence>
<accession>Q837B3</accession>